<organism>
    <name type="scientific">Escherichia coli (strain K12)</name>
    <dbReference type="NCBI Taxonomy" id="83333"/>
    <lineage>
        <taxon>Bacteria</taxon>
        <taxon>Pseudomonadati</taxon>
        <taxon>Pseudomonadota</taxon>
        <taxon>Gammaproteobacteria</taxon>
        <taxon>Enterobacterales</taxon>
        <taxon>Enterobacteriaceae</taxon>
        <taxon>Escherichia</taxon>
    </lineage>
</organism>
<sequence>MIDYTAAGFTLLQGAHLYAPEDRGICDVLVANGKIIAVASNIPSDIVPNCTVVDLSGQILCPGFIDQHVHLIGGGGEAGPTTRTPEVALSRLTEAGVTSVVGLLGTDSISRHPESLLAKTRALNEEGISAWMLTGAYHVPSRTITGSVEKDVAIIDRVIGVKCAISDHRSAAPDVYHLANMAAESRVGGLLGGKPGVTVFHMGDSKKALQPIYDLLENCDVPISKLLPTHVNRNVPLFEQALEFARKGGTIDITSSIDEPVAPAEGIARAVQAGIPLARVTLSSDGNGSQPFFDDEGNLTHIGVAGFETLLETVQVLVKDYDFSISDALRPLTSSVAGFLNLTGKGEILPGNDADLLVMTPELRIEQVYARGKLMVKDGKACVKGTFETA</sequence>
<proteinExistence type="evidence at protein level"/>
<dbReference type="EC" id="3.4.19.-"/>
<dbReference type="EMBL" id="U15029">
    <property type="protein sequence ID" value="AAC43299.1"/>
    <property type="molecule type" value="Genomic_DNA"/>
</dbReference>
<dbReference type="EMBL" id="U14003">
    <property type="protein sequence ID" value="AAA97224.1"/>
    <property type="molecule type" value="Genomic_DNA"/>
</dbReference>
<dbReference type="EMBL" id="U00096">
    <property type="protein sequence ID" value="AAC77284.1"/>
    <property type="molecule type" value="Genomic_DNA"/>
</dbReference>
<dbReference type="EMBL" id="AP009048">
    <property type="protein sequence ID" value="BAE78321.1"/>
    <property type="molecule type" value="Genomic_DNA"/>
</dbReference>
<dbReference type="PIR" id="B55889">
    <property type="entry name" value="B55889"/>
</dbReference>
<dbReference type="RefSeq" id="NP_418748.1">
    <property type="nucleotide sequence ID" value="NC_000913.3"/>
</dbReference>
<dbReference type="RefSeq" id="WP_000568432.1">
    <property type="nucleotide sequence ID" value="NZ_STEB01000025.1"/>
</dbReference>
<dbReference type="PDB" id="1ONW">
    <property type="method" value="X-ray"/>
    <property type="resolution" value="1.65 A"/>
    <property type="chains" value="A/B=1-390"/>
</dbReference>
<dbReference type="PDB" id="1ONX">
    <property type="method" value="X-ray"/>
    <property type="resolution" value="2.10 A"/>
    <property type="chains" value="A/B=1-390"/>
</dbReference>
<dbReference type="PDB" id="1PO9">
    <property type="method" value="X-ray"/>
    <property type="resolution" value="2.00 A"/>
    <property type="chains" value="A/B=1-390"/>
</dbReference>
<dbReference type="PDB" id="1POJ">
    <property type="method" value="X-ray"/>
    <property type="resolution" value="3.30 A"/>
    <property type="chains" value="A/B=1-390"/>
</dbReference>
<dbReference type="PDB" id="1POK">
    <property type="method" value="X-ray"/>
    <property type="resolution" value="2.70 A"/>
    <property type="chains" value="A/B=1-390"/>
</dbReference>
<dbReference type="PDB" id="1YBQ">
    <property type="method" value="X-ray"/>
    <property type="resolution" value="2.00 A"/>
    <property type="chains" value="A/B=1-390"/>
</dbReference>
<dbReference type="PDB" id="2AQO">
    <property type="method" value="X-ray"/>
    <property type="resolution" value="1.95 A"/>
    <property type="chains" value="A/B=1-390"/>
</dbReference>
<dbReference type="PDB" id="2AQV">
    <property type="method" value="X-ray"/>
    <property type="resolution" value="1.95 A"/>
    <property type="chains" value="A/B=1-390"/>
</dbReference>
<dbReference type="PDB" id="5LP3">
    <property type="method" value="EM"/>
    <property type="resolution" value="10.50 A"/>
    <property type="chains" value="A/B/C/D/E/F/G/H/I/J/K/L=1-390"/>
</dbReference>
<dbReference type="PDBsum" id="1ONW"/>
<dbReference type="PDBsum" id="1ONX"/>
<dbReference type="PDBsum" id="1PO9"/>
<dbReference type="PDBsum" id="1POJ"/>
<dbReference type="PDBsum" id="1POK"/>
<dbReference type="PDBsum" id="1YBQ"/>
<dbReference type="PDBsum" id="2AQO"/>
<dbReference type="PDBsum" id="2AQV"/>
<dbReference type="PDBsum" id="5LP3"/>
<dbReference type="SMR" id="P39377"/>
<dbReference type="BioGRID" id="4261005">
    <property type="interactions" value="18"/>
</dbReference>
<dbReference type="DIP" id="DIP-10001N"/>
<dbReference type="FunCoup" id="P39377">
    <property type="interactions" value="13"/>
</dbReference>
<dbReference type="IntAct" id="P39377">
    <property type="interactions" value="4"/>
</dbReference>
<dbReference type="STRING" id="511145.b4328"/>
<dbReference type="DrugBank" id="DB02437">
    <property type="generic name" value="(5r)-5-Amino-6-Hydroxyhexylcarbamic Acid"/>
</dbReference>
<dbReference type="DrugBank" id="DB03801">
    <property type="generic name" value="Lysine Nz-Carboxylic Acid"/>
</dbReference>
<dbReference type="MEROPS" id="M38.001"/>
<dbReference type="jPOST" id="P39377"/>
<dbReference type="PaxDb" id="511145-b4328"/>
<dbReference type="EnsemblBacteria" id="AAC77284">
    <property type="protein sequence ID" value="AAC77284"/>
    <property type="gene ID" value="b4328"/>
</dbReference>
<dbReference type="GeneID" id="948853"/>
<dbReference type="KEGG" id="ecj:JW4291"/>
<dbReference type="KEGG" id="eco:b4328"/>
<dbReference type="KEGG" id="ecoc:C3026_23395"/>
<dbReference type="PATRIC" id="fig|1411691.4.peg.2361"/>
<dbReference type="EchoBASE" id="EB2455"/>
<dbReference type="eggNOG" id="COG1820">
    <property type="taxonomic scope" value="Bacteria"/>
</dbReference>
<dbReference type="HOGENOM" id="CLU_058216_0_0_6"/>
<dbReference type="InParanoid" id="P39377"/>
<dbReference type="OMA" id="FIPTHIN"/>
<dbReference type="OrthoDB" id="9776455at2"/>
<dbReference type="PhylomeDB" id="P39377"/>
<dbReference type="BioCyc" id="EcoCyc:G7925-MONOMER"/>
<dbReference type="BioCyc" id="MetaCyc:G7925-MONOMER"/>
<dbReference type="BRENDA" id="3.4.19.5">
    <property type="organism ID" value="2026"/>
</dbReference>
<dbReference type="SABIO-RK" id="P39377"/>
<dbReference type="EvolutionaryTrace" id="P39377"/>
<dbReference type="PRO" id="PR:P39377"/>
<dbReference type="Proteomes" id="UP000000625">
    <property type="component" value="Chromosome"/>
</dbReference>
<dbReference type="GO" id="GO:0005737">
    <property type="term" value="C:cytoplasm"/>
    <property type="evidence" value="ECO:0000314"/>
    <property type="project" value="UniProtKB"/>
</dbReference>
<dbReference type="GO" id="GO:0005829">
    <property type="term" value="C:cytosol"/>
    <property type="evidence" value="ECO:0000314"/>
    <property type="project" value="EcoCyc"/>
</dbReference>
<dbReference type="GO" id="GO:0008798">
    <property type="term" value="F:beta-aspartyl-peptidase activity"/>
    <property type="evidence" value="ECO:0000314"/>
    <property type="project" value="UniProtKB"/>
</dbReference>
<dbReference type="GO" id="GO:0016810">
    <property type="term" value="F:hydrolase activity, acting on carbon-nitrogen (but not peptide) bonds"/>
    <property type="evidence" value="ECO:0007669"/>
    <property type="project" value="InterPro"/>
</dbReference>
<dbReference type="GO" id="GO:0042802">
    <property type="term" value="F:identical protein binding"/>
    <property type="evidence" value="ECO:0000314"/>
    <property type="project" value="EcoCyc"/>
</dbReference>
<dbReference type="GO" id="GO:0008237">
    <property type="term" value="F:metallopeptidase activity"/>
    <property type="evidence" value="ECO:0007669"/>
    <property type="project" value="UniProtKB-KW"/>
</dbReference>
<dbReference type="GO" id="GO:0008270">
    <property type="term" value="F:zinc ion binding"/>
    <property type="evidence" value="ECO:0000314"/>
    <property type="project" value="UniProtKB"/>
</dbReference>
<dbReference type="GO" id="GO:0006508">
    <property type="term" value="P:proteolysis"/>
    <property type="evidence" value="ECO:0007669"/>
    <property type="project" value="UniProtKB-KW"/>
</dbReference>
<dbReference type="CDD" id="cd01308">
    <property type="entry name" value="Isoaspartyl-dipeptidase"/>
    <property type="match status" value="1"/>
</dbReference>
<dbReference type="FunFam" id="3.20.20.140:FF:000042">
    <property type="entry name" value="Isoaspartyl dipeptidase"/>
    <property type="match status" value="1"/>
</dbReference>
<dbReference type="Gene3D" id="3.20.20.140">
    <property type="entry name" value="Metal-dependent hydrolases"/>
    <property type="match status" value="1"/>
</dbReference>
<dbReference type="Gene3D" id="2.30.40.10">
    <property type="entry name" value="Urease, subunit C, domain 1"/>
    <property type="match status" value="1"/>
</dbReference>
<dbReference type="InterPro" id="IPR006680">
    <property type="entry name" value="Amidohydro-rel"/>
</dbReference>
<dbReference type="InterPro" id="IPR033826">
    <property type="entry name" value="Isoaspartyl-dipeptidase"/>
</dbReference>
<dbReference type="InterPro" id="IPR011059">
    <property type="entry name" value="Metal-dep_hydrolase_composite"/>
</dbReference>
<dbReference type="InterPro" id="IPR032466">
    <property type="entry name" value="Metal_Hydrolase"/>
</dbReference>
<dbReference type="InterPro" id="IPR050378">
    <property type="entry name" value="Metallo-dep_Hydrolases_sf"/>
</dbReference>
<dbReference type="InterPro" id="IPR010229">
    <property type="entry name" value="Pept_M38_dipep"/>
</dbReference>
<dbReference type="NCBIfam" id="TIGR01975">
    <property type="entry name" value="isoAsp_dipep"/>
    <property type="match status" value="1"/>
</dbReference>
<dbReference type="PANTHER" id="PTHR11647:SF1">
    <property type="entry name" value="COLLAPSIN RESPONSE MEDIATOR PROTEIN"/>
    <property type="match status" value="1"/>
</dbReference>
<dbReference type="PANTHER" id="PTHR11647">
    <property type="entry name" value="HYDRANTOINASE/DIHYDROPYRIMIDINASE FAMILY MEMBER"/>
    <property type="match status" value="1"/>
</dbReference>
<dbReference type="Pfam" id="PF01979">
    <property type="entry name" value="Amidohydro_1"/>
    <property type="match status" value="1"/>
</dbReference>
<dbReference type="PIRSF" id="PIRSF001238">
    <property type="entry name" value="IadA"/>
    <property type="match status" value="1"/>
</dbReference>
<dbReference type="SUPFAM" id="SSF51338">
    <property type="entry name" value="Composite domain of metallo-dependent hydrolases"/>
    <property type="match status" value="2"/>
</dbReference>
<dbReference type="SUPFAM" id="SSF51556">
    <property type="entry name" value="Metallo-dependent hydrolases"/>
    <property type="match status" value="1"/>
</dbReference>
<name>IADA_ECOLI</name>
<reference key="1">
    <citation type="journal article" date="1995" name="J. Biol. Chem.">
        <title>Purification and characterization of an isoaspartyl dipeptidase from Escherichia coli.</title>
        <authorList>
            <person name="Gary J.D."/>
            <person name="Clarke S."/>
        </authorList>
    </citation>
    <scope>NUCLEOTIDE SEQUENCE [GENOMIC DNA]</scope>
    <scope>PROTEIN SEQUENCE OF 1-24; 35-39; 84-91; 112-118; 122-147; 170-185; 187-204; 226-238; 247-264 AND 365-371</scope>
    <scope>FUNCTION</scope>
    <scope>CATALYTIC ACTIVITY</scope>
    <scope>SUBCELLULAR LOCATION</scope>
    <scope>DISRUPTION PHENOTYPE</scope>
    <source>
        <strain>K12 / W3110 / ATCC 27325 / DSM 5911</strain>
    </source>
</reference>
<reference key="2">
    <citation type="journal article" date="1995" name="Nucleic Acids Res.">
        <title>Analysis of the Escherichia coli genome VI: DNA sequence of the region from 92.8 through 100 minutes.</title>
        <authorList>
            <person name="Burland V.D."/>
            <person name="Plunkett G. III"/>
            <person name="Sofia H.J."/>
            <person name="Daniels D.L."/>
            <person name="Blattner F.R."/>
        </authorList>
    </citation>
    <scope>NUCLEOTIDE SEQUENCE [LARGE SCALE GENOMIC DNA]</scope>
    <source>
        <strain>K12 / MG1655 / ATCC 47076</strain>
    </source>
</reference>
<reference key="3">
    <citation type="journal article" date="1997" name="Science">
        <title>The complete genome sequence of Escherichia coli K-12.</title>
        <authorList>
            <person name="Blattner F.R."/>
            <person name="Plunkett G. III"/>
            <person name="Bloch C.A."/>
            <person name="Perna N.T."/>
            <person name="Burland V."/>
            <person name="Riley M."/>
            <person name="Collado-Vides J."/>
            <person name="Glasner J.D."/>
            <person name="Rode C.K."/>
            <person name="Mayhew G.F."/>
            <person name="Gregor J."/>
            <person name="Davis N.W."/>
            <person name="Kirkpatrick H.A."/>
            <person name="Goeden M.A."/>
            <person name="Rose D.J."/>
            <person name="Mau B."/>
            <person name="Shao Y."/>
        </authorList>
    </citation>
    <scope>NUCLEOTIDE SEQUENCE [LARGE SCALE GENOMIC DNA]</scope>
    <source>
        <strain>K12 / MG1655 / ATCC 47076</strain>
    </source>
</reference>
<reference key="4">
    <citation type="journal article" date="2006" name="Mol. Syst. Biol.">
        <title>Highly accurate genome sequences of Escherichia coli K-12 strains MG1655 and W3110.</title>
        <authorList>
            <person name="Hayashi K."/>
            <person name="Morooka N."/>
            <person name="Yamamoto Y."/>
            <person name="Fujita K."/>
            <person name="Isono K."/>
            <person name="Choi S."/>
            <person name="Ohtsubo E."/>
            <person name="Baba T."/>
            <person name="Wanner B.L."/>
            <person name="Mori H."/>
            <person name="Horiuchi T."/>
        </authorList>
    </citation>
    <scope>NUCLEOTIDE SEQUENCE [LARGE SCALE GENOMIC DNA]</scope>
    <source>
        <strain>K12 / W3110 / ATCC 27325 / DSM 5911</strain>
    </source>
</reference>
<reference key="5">
    <citation type="journal article" date="1968" name="J. Biol. Chem.">
        <title>Purification and properties of a beta-aspartyl peptidase from Escherichia coli.</title>
        <authorList>
            <person name="Haley E.E."/>
        </authorList>
    </citation>
    <scope>FUNCTION</scope>
    <scope>CATALYTIC ACTIVITY</scope>
    <scope>ACTIVITY REGULATION</scope>
    <scope>BIOPHYSICOCHEMICAL PROPERTIES</scope>
</reference>
<reference key="6">
    <citation type="journal article" date="2003" name="Biochemistry">
        <title>High-resolution X-ray structure of isoaspartyl dipeptidase from Escherichia coli.</title>
        <authorList>
            <person name="Thoden J.B."/>
            <person name="Marti-Arbona R."/>
            <person name="Raushel F.M."/>
            <person name="Holden H.M."/>
        </authorList>
    </citation>
    <scope>X-RAY CRYSTALLOGRAPHY (1.65 ANGSTROMS) OF 13-389 IN COMPLEX WITH ASPARTATE AND ZINC IONS</scope>
    <scope>FUNCTION</scope>
    <scope>COFACTOR</scope>
    <scope>CARBOXYLATION AT LYS-162</scope>
</reference>
<reference key="7">
    <citation type="journal article" date="2003" name="J. Mol. Biol.">
        <title>X-ray structure of isoaspartyl dipeptidase from E.coli: a dinuclear zinc peptidase evolved from amidohydrolases.</title>
        <authorList>
            <person name="Jozic D."/>
            <person name="Kaiser J.T."/>
            <person name="Huber R."/>
            <person name="Bode W."/>
            <person name="Maskos K."/>
        </authorList>
    </citation>
    <scope>X-RAY CRYSTALLOGRAPHY (2.00 ANGSTROMS) IN COMPLEX WITH INHIBITOR; ASPARAGINE AND ZINC IONS</scope>
    <scope>COFACTOR</scope>
    <scope>ACTIVE SITE</scope>
    <scope>CARBOXYLATION AT LYS-162</scope>
    <source>
        <strain>K12 / W3110 / ATCC 27325 / DSM 5911</strain>
    </source>
</reference>
<reference key="8">
    <citation type="journal article" date="2005" name="Biochemistry">
        <title>Mechanism of the reaction catalyzed by isoaspartyl dipeptidase from Escherichia coli.</title>
        <authorList>
            <person name="Marti-Arbona R."/>
            <person name="Fresquet V."/>
            <person name="Thoden J.B."/>
            <person name="Davis M.L."/>
            <person name="Holden H.M."/>
            <person name="Raushel F.M."/>
        </authorList>
    </citation>
    <scope>X-RAY CRYSTALLOGRAPHY (2.0 ANGSTROMS) IN COMPLEX WITH SUBSTRATE ANALOG AND ZINC IONS</scope>
    <scope>CATALYTIC ACTIVITY</scope>
    <scope>FUNCTION</scope>
    <scope>COFACTOR</scope>
    <scope>CARBOXYLATION AT LYS-162</scope>
    <scope>MUTAGENESIS OF GLU-77; TYR-137; ARG-169; ARG-233 AND ASP-285</scope>
</reference>
<reference key="9">
    <citation type="journal article" date="2005" name="Bioorg. Chem.">
        <title>Functional significance of Glu-77 and Tyr-137 within the active site of isoaspartyl dipeptidase.</title>
        <authorList>
            <person name="Marti-Arbona R."/>
            <person name="Thoden J.B."/>
            <person name="Holden H.M."/>
            <person name="Raushel F.M."/>
        </authorList>
    </citation>
    <scope>X-RAY CRYSTALLOGRAPHY (1.95 ANGSTROMS) OF MUTANTS GLN-77 AND PHE-137 IN COMPLEX WITH ZINC IONS</scope>
    <scope>CARBOXYLATION AT LYS-162</scope>
    <scope>MUTAGENESIS OF GLU-77 AND TYR-137</scope>
</reference>
<evidence type="ECO:0000269" key="1">
    <source>
    </source>
</evidence>
<evidence type="ECO:0000269" key="2">
    <source>
    </source>
</evidence>
<evidence type="ECO:0000269" key="3">
    <source>
    </source>
</evidence>
<evidence type="ECO:0000269" key="4">
    <source>
    </source>
</evidence>
<evidence type="ECO:0000269" key="5">
    <source>
    </source>
</evidence>
<evidence type="ECO:0000269" key="6">
    <source>
    </source>
</evidence>
<evidence type="ECO:0000305" key="7"/>
<evidence type="ECO:0000305" key="8">
    <source>
    </source>
</evidence>
<evidence type="ECO:0000305" key="9">
    <source>
    </source>
</evidence>
<evidence type="ECO:0000305" key="10">
    <source>
    </source>
</evidence>
<evidence type="ECO:0007829" key="11">
    <source>
        <dbReference type="PDB" id="1ONW"/>
    </source>
</evidence>
<evidence type="ECO:0007829" key="12">
    <source>
        <dbReference type="PDB" id="1ONX"/>
    </source>
</evidence>
<evidence type="ECO:0007829" key="13">
    <source>
        <dbReference type="PDB" id="1PO9"/>
    </source>
</evidence>
<evidence type="ECO:0007829" key="14">
    <source>
        <dbReference type="PDB" id="1YBQ"/>
    </source>
</evidence>
<feature type="chain" id="PRO_0000079178" description="Isoaspartyl dipeptidase">
    <location>
        <begin position="1"/>
        <end position="390"/>
    </location>
</feature>
<feature type="active site" description="Proton acceptor" evidence="2">
    <location>
        <position position="285"/>
    </location>
</feature>
<feature type="binding site" evidence="1 2 3 4">
    <location>
        <position position="68"/>
    </location>
    <ligand>
        <name>Zn(2+)</name>
        <dbReference type="ChEBI" id="CHEBI:29105"/>
        <label>1</label>
        <note>catalytic</note>
    </ligand>
</feature>
<feature type="binding site" evidence="1 2 3 4">
    <location>
        <position position="70"/>
    </location>
    <ligand>
        <name>Zn(2+)</name>
        <dbReference type="ChEBI" id="CHEBI:29105"/>
        <label>1</label>
        <note>catalytic</note>
    </ligand>
</feature>
<feature type="binding site">
    <location>
        <begin position="75"/>
        <end position="77"/>
    </location>
    <ligand>
        <name>substrate</name>
    </ligand>
</feature>
<feature type="binding site" evidence="8 9 10">
    <location>
        <position position="106"/>
    </location>
    <ligand>
        <name>substrate</name>
    </ligand>
</feature>
<feature type="binding site" evidence="8 9 10">
    <location>
        <position position="137"/>
    </location>
    <ligand>
        <name>substrate</name>
    </ligand>
</feature>
<feature type="binding site" description="via carbamate group" evidence="1 2 3 4">
    <location>
        <position position="162"/>
    </location>
    <ligand>
        <name>Zn(2+)</name>
        <dbReference type="ChEBI" id="CHEBI:29105"/>
        <label>1</label>
        <note>catalytic</note>
    </ligand>
</feature>
<feature type="binding site" description="via carbamate group" evidence="1 2 3 4">
    <location>
        <position position="162"/>
    </location>
    <ligand>
        <name>Zn(2+)</name>
        <dbReference type="ChEBI" id="CHEBI:29105"/>
        <label>2</label>
        <note>catalytic</note>
    </ligand>
</feature>
<feature type="binding site" evidence="8 9 10">
    <location>
        <position position="169"/>
    </location>
    <ligand>
        <name>substrate</name>
    </ligand>
</feature>
<feature type="binding site" evidence="1 2 3 4">
    <location>
        <position position="201"/>
    </location>
    <ligand>
        <name>Zn(2+)</name>
        <dbReference type="ChEBI" id="CHEBI:29105"/>
        <label>2</label>
        <note>catalytic</note>
    </ligand>
</feature>
<feature type="binding site" evidence="1 2 3 4">
    <location>
        <position position="230"/>
    </location>
    <ligand>
        <name>Zn(2+)</name>
        <dbReference type="ChEBI" id="CHEBI:29105"/>
        <label>2</label>
        <note>catalytic</note>
    </ligand>
</feature>
<feature type="binding site" evidence="8 9 10">
    <location>
        <position position="233"/>
    </location>
    <ligand>
        <name>substrate</name>
    </ligand>
</feature>
<feature type="binding site" evidence="1 2 3 4">
    <location>
        <position position="285"/>
    </location>
    <ligand>
        <name>Zn(2+)</name>
        <dbReference type="ChEBI" id="CHEBI:29105"/>
        <label>1</label>
        <note>catalytic</note>
    </ligand>
</feature>
<feature type="binding site" evidence="8 9 10">
    <location>
        <position position="289"/>
    </location>
    <ligand>
        <name>substrate</name>
    </ligand>
</feature>
<feature type="modified residue" description="N6-carboxylysine" evidence="1 2 3 4">
    <location>
        <position position="162"/>
    </location>
</feature>
<feature type="mutagenesis site" description="Reduces activity 100000-fold." evidence="3 4">
    <original>E</original>
    <variation>D</variation>
    <variation>Q</variation>
    <location>
        <position position="77"/>
    </location>
</feature>
<feature type="mutagenesis site" description="Reduces activity 1000-fold." evidence="3 4">
    <original>Y</original>
    <variation>A</variation>
    <variation>F</variation>
    <location>
        <position position="137"/>
    </location>
</feature>
<feature type="mutagenesis site" description="Reduces activity 1000-fold." evidence="3">
    <original>R</original>
    <variation>K</variation>
    <location>
        <position position="169"/>
    </location>
</feature>
<feature type="mutagenesis site" description="Loss of activity." evidence="3">
    <original>R</original>
    <variation>M</variation>
    <location>
        <position position="169"/>
    </location>
</feature>
<feature type="mutagenesis site" description="Reduces activity 1000-fold." evidence="3">
    <original>R</original>
    <variation>K</variation>
    <location>
        <position position="233"/>
    </location>
</feature>
<feature type="mutagenesis site" description="Loss of activity." evidence="3">
    <original>R</original>
    <variation>M</variation>
    <location>
        <position position="233"/>
    </location>
</feature>
<feature type="mutagenesis site" description="Reduces activity 100000-fold." evidence="3">
    <original>D</original>
    <variation>A</variation>
    <location>
        <position position="285"/>
    </location>
</feature>
<feature type="helix" evidence="11">
    <location>
        <begin position="5"/>
        <end position="7"/>
    </location>
</feature>
<feature type="strand" evidence="11">
    <location>
        <begin position="10"/>
        <end position="14"/>
    </location>
</feature>
<feature type="strand" evidence="11">
    <location>
        <begin position="16"/>
        <end position="25"/>
    </location>
</feature>
<feature type="strand" evidence="11">
    <location>
        <begin position="27"/>
        <end position="31"/>
    </location>
</feature>
<feature type="strand" evidence="11">
    <location>
        <begin position="34"/>
        <end position="39"/>
    </location>
</feature>
<feature type="strand" evidence="11">
    <location>
        <begin position="46"/>
        <end position="49"/>
    </location>
</feature>
<feature type="strand" evidence="11">
    <location>
        <begin position="51"/>
        <end position="54"/>
    </location>
</feature>
<feature type="strand" evidence="11">
    <location>
        <begin position="59"/>
        <end position="62"/>
    </location>
</feature>
<feature type="strand" evidence="11">
    <location>
        <begin position="64"/>
        <end position="69"/>
    </location>
</feature>
<feature type="helix" evidence="11">
    <location>
        <begin position="80"/>
        <end position="82"/>
    </location>
</feature>
<feature type="helix" evidence="11">
    <location>
        <begin position="89"/>
        <end position="94"/>
    </location>
</feature>
<feature type="strand" evidence="11">
    <location>
        <begin position="97"/>
        <end position="102"/>
    </location>
</feature>
<feature type="helix" evidence="11">
    <location>
        <begin position="113"/>
        <end position="126"/>
    </location>
</feature>
<feature type="strand" evidence="11">
    <location>
        <begin position="128"/>
        <end position="135"/>
    </location>
</feature>
<feature type="strand" evidence="13">
    <location>
        <begin position="137"/>
        <end position="140"/>
    </location>
</feature>
<feature type="strand" evidence="11">
    <location>
        <begin position="144"/>
        <end position="146"/>
    </location>
</feature>
<feature type="helix" evidence="11">
    <location>
        <begin position="148"/>
        <end position="154"/>
    </location>
</feature>
<feature type="strand" evidence="11">
    <location>
        <begin position="158"/>
        <end position="167"/>
    </location>
</feature>
<feature type="helix" evidence="11">
    <location>
        <begin position="175"/>
        <end position="192"/>
    </location>
</feature>
<feature type="strand" evidence="11">
    <location>
        <begin position="197"/>
        <end position="202"/>
    </location>
</feature>
<feature type="turn" evidence="11">
    <location>
        <begin position="206"/>
        <end position="209"/>
    </location>
</feature>
<feature type="helix" evidence="11">
    <location>
        <begin position="210"/>
        <end position="217"/>
    </location>
</feature>
<feature type="helix" evidence="11">
    <location>
        <begin position="223"/>
        <end position="225"/>
    </location>
</feature>
<feature type="strand" evidence="11">
    <location>
        <begin position="226"/>
        <end position="229"/>
    </location>
</feature>
<feature type="helix" evidence="11">
    <location>
        <begin position="231"/>
        <end position="233"/>
    </location>
</feature>
<feature type="helix" evidence="11">
    <location>
        <begin position="235"/>
        <end position="246"/>
    </location>
</feature>
<feature type="strand" evidence="11">
    <location>
        <begin position="251"/>
        <end position="254"/>
    </location>
</feature>
<feature type="strand" evidence="11">
    <location>
        <begin position="259"/>
        <end position="261"/>
    </location>
</feature>
<feature type="helix" evidence="11">
    <location>
        <begin position="263"/>
        <end position="272"/>
    </location>
</feature>
<feature type="helix" evidence="11">
    <location>
        <begin position="277"/>
        <end position="279"/>
    </location>
</feature>
<feature type="strand" evidence="11">
    <location>
        <begin position="280"/>
        <end position="283"/>
    </location>
</feature>
<feature type="strand" evidence="14">
    <location>
        <begin position="289"/>
        <end position="293"/>
    </location>
</feature>
<feature type="strand" evidence="12">
    <location>
        <begin position="295"/>
        <end position="297"/>
    </location>
</feature>
<feature type="strand" evidence="14">
    <location>
        <begin position="299"/>
        <end position="304"/>
    </location>
</feature>
<feature type="helix" evidence="11">
    <location>
        <begin position="309"/>
        <end position="321"/>
    </location>
</feature>
<feature type="helix" evidence="11">
    <location>
        <begin position="325"/>
        <end position="329"/>
    </location>
</feature>
<feature type="helix" evidence="11">
    <location>
        <begin position="330"/>
        <end position="332"/>
    </location>
</feature>
<feature type="helix" evidence="11">
    <location>
        <begin position="334"/>
        <end position="339"/>
    </location>
</feature>
<feature type="strand" evidence="11">
    <location>
        <begin position="356"/>
        <end position="359"/>
    </location>
</feature>
<feature type="strand" evidence="11">
    <location>
        <begin position="365"/>
        <end position="370"/>
    </location>
</feature>
<feature type="strand" evidence="11">
    <location>
        <begin position="373"/>
        <end position="377"/>
    </location>
</feature>
<feature type="strand" evidence="11">
    <location>
        <begin position="380"/>
        <end position="383"/>
    </location>
</feature>
<comment type="function">
    <text evidence="1 3 5 6">Catalyzes the hydrolytic cleavage of a subset of L-isoaspartyl (L-beta-aspartyl) dipeptides. Used to degrade proteins damaged by L-isoaspartyl residues formation. The best substrate for the enzyme reported thus far is iso-Asp-Leu.</text>
</comment>
<comment type="cofactor">
    <cofactor evidence="1 2 3">
        <name>Zn(2+)</name>
        <dbReference type="ChEBI" id="CHEBI:29105"/>
    </cofactor>
    <cofactor evidence="1 2 3">
        <name>Co(2+)</name>
        <dbReference type="ChEBI" id="CHEBI:48828"/>
    </cofactor>
    <text evidence="1 2 3">Binds 2 Zn(2+) ions per subunit. Has highest activity with Zn(2+) ions, but is also active with Co(2+) ions.</text>
</comment>
<comment type="activity regulation">
    <text evidence="5">P-hydroxymercuribenzoate causes a slight inhibition (8 to 17 %). Iodoacetamide, o-iodosobenzoate and ammonium persulfate do not inhibit the enzyme activity.</text>
</comment>
<comment type="biophysicochemical properties">
    <kinetics>
        <KM evidence="5">0.81 mM for beta-aspartylleucine (at pH 8.0)</KM>
    </kinetics>
    <phDependence>
        <text evidence="5">Optimum pH is 7.5. Active over a wide pH range.</text>
    </phDependence>
</comment>
<comment type="subcellular location">
    <subcellularLocation>
        <location evidence="6">Cytoplasm</location>
    </subcellularLocation>
</comment>
<comment type="PTM">
    <text evidence="1 2 3 4">Carboxylation allows a single lysine to coordinate two zinc ions (PubMed:12718528, PubMed:12946361, PubMed:15882050, PubMed:16289685).</text>
</comment>
<comment type="disruption phenotype">
    <text evidence="6">No observable phenotype. Does not result in reduced stationary phase or heat shock survival. Approximately 31% of the enzyme activity present.</text>
</comment>
<comment type="similarity">
    <text evidence="7">Belongs to the peptidase M38 family.</text>
</comment>
<accession>P39377</accession>
<accession>Q2M5Y5</accession>
<gene>
    <name type="primary">iadA</name>
    <name type="synonym">yjiF</name>
    <name type="ordered locus">b4328</name>
    <name type="ordered locus">JW4291</name>
</gene>
<protein>
    <recommendedName>
        <fullName>Isoaspartyl dipeptidase</fullName>
        <ecNumber>3.4.19.-</ecNumber>
    </recommendedName>
</protein>
<keyword id="KW-0002">3D-structure</keyword>
<keyword id="KW-0170">Cobalt</keyword>
<keyword id="KW-0963">Cytoplasm</keyword>
<keyword id="KW-0903">Direct protein sequencing</keyword>
<keyword id="KW-0378">Hydrolase</keyword>
<keyword id="KW-0479">Metal-binding</keyword>
<keyword id="KW-0482">Metalloprotease</keyword>
<keyword id="KW-0645">Protease</keyword>
<keyword id="KW-1185">Reference proteome</keyword>
<keyword id="KW-0862">Zinc</keyword>